<keyword id="KW-0408">Iron</keyword>
<keyword id="KW-0464">Manganese</keyword>
<keyword id="KW-0479">Metal-binding</keyword>
<keyword id="KW-0560">Oxidoreductase</keyword>
<keyword id="KW-1185">Reference proteome</keyword>
<evidence type="ECO:0000250" key="1">
    <source>
        <dbReference type="UniProtKB" id="P9WH69"/>
    </source>
</evidence>
<evidence type="ECO:0000305" key="2"/>
<feature type="chain" id="PRO_0000375427" description="R2-like ligand binding oxidase">
    <location>
        <begin position="1"/>
        <end position="311"/>
    </location>
</feature>
<feature type="binding site" evidence="1">
    <location>
        <position position="68"/>
    </location>
    <ligand>
        <name>Mn(2+)</name>
        <dbReference type="ChEBI" id="CHEBI:29035"/>
    </ligand>
</feature>
<feature type="binding site" evidence="1">
    <location>
        <position position="101"/>
    </location>
    <ligand>
        <name>Fe cation</name>
        <dbReference type="ChEBI" id="CHEBI:24875"/>
    </ligand>
</feature>
<feature type="binding site" evidence="1">
    <location>
        <position position="101"/>
    </location>
    <ligand>
        <name>Mn(2+)</name>
        <dbReference type="ChEBI" id="CHEBI:29035"/>
    </ligand>
</feature>
<feature type="binding site" evidence="1">
    <location>
        <position position="104"/>
    </location>
    <ligand>
        <name>Mn(2+)</name>
        <dbReference type="ChEBI" id="CHEBI:29035"/>
    </ligand>
</feature>
<feature type="binding site" evidence="1">
    <location>
        <position position="167"/>
    </location>
    <ligand>
        <name>Fe cation</name>
        <dbReference type="ChEBI" id="CHEBI:24875"/>
    </ligand>
</feature>
<feature type="binding site" evidence="1">
    <location>
        <position position="202"/>
    </location>
    <ligand>
        <name>Fe cation</name>
        <dbReference type="ChEBI" id="CHEBI:24875"/>
    </ligand>
</feature>
<feature type="binding site" evidence="1">
    <location>
        <position position="205"/>
    </location>
    <ligand>
        <name>Fe cation</name>
        <dbReference type="ChEBI" id="CHEBI:24875"/>
    </ligand>
</feature>
<feature type="cross-link" description="3-(O4'-tyrosyl)-valine (Val-Tyr)" evidence="1">
    <location>
        <begin position="71"/>
        <end position="162"/>
    </location>
</feature>
<proteinExistence type="inferred from homology"/>
<organism>
    <name type="scientific">Mycolicibacterium paratuberculosis (strain ATCC BAA-968 / K-10)</name>
    <name type="common">Mycobacterium paratuberculosis</name>
    <dbReference type="NCBI Taxonomy" id="262316"/>
    <lineage>
        <taxon>Bacteria</taxon>
        <taxon>Bacillati</taxon>
        <taxon>Actinomycetota</taxon>
        <taxon>Actinomycetes</taxon>
        <taxon>Mycobacteriales</taxon>
        <taxon>Mycobacteriaceae</taxon>
        <taxon>Mycobacterium</taxon>
        <taxon>Mycobacterium avium complex (MAC)</taxon>
    </lineage>
</organism>
<dbReference type="EC" id="1.-.-.-" evidence="1"/>
<dbReference type="EMBL" id="AE016958">
    <property type="protein sequence ID" value="AAS06222.1"/>
    <property type="molecule type" value="Genomic_DNA"/>
</dbReference>
<dbReference type="RefSeq" id="WP_003874064.1">
    <property type="nucleotide sequence ID" value="NZ_CP106873.1"/>
</dbReference>
<dbReference type="SMR" id="Q73TP6"/>
<dbReference type="STRING" id="262316.MAP_3672"/>
<dbReference type="KEGG" id="mpa:MAP_3672"/>
<dbReference type="eggNOG" id="COG0208">
    <property type="taxonomic scope" value="Bacteria"/>
</dbReference>
<dbReference type="HOGENOM" id="CLU_072736_0_0_11"/>
<dbReference type="Proteomes" id="UP000000580">
    <property type="component" value="Chromosome"/>
</dbReference>
<dbReference type="GO" id="GO:0046872">
    <property type="term" value="F:metal ion binding"/>
    <property type="evidence" value="ECO:0007669"/>
    <property type="project" value="UniProtKB-KW"/>
</dbReference>
<dbReference type="GO" id="GO:0016491">
    <property type="term" value="F:oxidoreductase activity"/>
    <property type="evidence" value="ECO:0007669"/>
    <property type="project" value="UniProtKB-KW"/>
</dbReference>
<dbReference type="GO" id="GO:0009263">
    <property type="term" value="P:deoxyribonucleotide biosynthetic process"/>
    <property type="evidence" value="ECO:0007669"/>
    <property type="project" value="InterPro"/>
</dbReference>
<dbReference type="CDD" id="cd07911">
    <property type="entry name" value="RNRR2_Rv0233_like"/>
    <property type="match status" value="1"/>
</dbReference>
<dbReference type="Gene3D" id="1.10.620.20">
    <property type="entry name" value="Ribonucleotide Reductase, subunit A"/>
    <property type="match status" value="1"/>
</dbReference>
<dbReference type="InterPro" id="IPR009078">
    <property type="entry name" value="Ferritin-like_SF"/>
</dbReference>
<dbReference type="InterPro" id="IPR033908">
    <property type="entry name" value="R2LOX"/>
</dbReference>
<dbReference type="InterPro" id="IPR012348">
    <property type="entry name" value="RNR-like"/>
</dbReference>
<dbReference type="InterPro" id="IPR000358">
    <property type="entry name" value="RNR_small_fam"/>
</dbReference>
<dbReference type="NCBIfam" id="NF006199">
    <property type="entry name" value="PRK08326.1-2"/>
    <property type="match status" value="1"/>
</dbReference>
<dbReference type="NCBIfam" id="NF006200">
    <property type="entry name" value="PRK08326.1-3"/>
    <property type="match status" value="1"/>
</dbReference>
<dbReference type="NCBIfam" id="NF006201">
    <property type="entry name" value="PRK08326.1-4"/>
    <property type="match status" value="1"/>
</dbReference>
<dbReference type="Pfam" id="PF00268">
    <property type="entry name" value="Ribonuc_red_sm"/>
    <property type="match status" value="1"/>
</dbReference>
<dbReference type="SUPFAM" id="SSF47240">
    <property type="entry name" value="Ferritin-like"/>
    <property type="match status" value="1"/>
</dbReference>
<protein>
    <recommendedName>
        <fullName evidence="1">R2-like ligand binding oxidase</fullName>
        <ecNumber evidence="1">1.-.-.-</ecNumber>
    </recommendedName>
    <alternativeName>
        <fullName>Ribonucleotide reductase R2 subunit homolog</fullName>
    </alternativeName>
    <alternativeName>
        <fullName>Ribonucleotide reductase small subunit homolog</fullName>
    </alternativeName>
</protein>
<comment type="function">
    <text evidence="1">Probable oxidase that might be involved in lipid metabolism.</text>
</comment>
<comment type="cofactor">
    <cofactor evidence="1">
        <name>Fe cation</name>
        <dbReference type="ChEBI" id="CHEBI:24875"/>
    </cofactor>
    <text evidence="1">Binds 1 Fe cation per subunit.</text>
</comment>
<comment type="cofactor">
    <cofactor evidence="1">
        <name>Mn(2+)</name>
        <dbReference type="ChEBI" id="CHEBI:29035"/>
    </cofactor>
    <text evidence="1">Binds 1 manganese ion per subunit. The iron and manganese ions form a dinuclear manganese-iron cluster.</text>
</comment>
<comment type="subunit">
    <text evidence="1">Homodimer.</text>
</comment>
<comment type="similarity">
    <text evidence="2">Belongs to the ribonucleoside diphosphate reductase small chain family. R2-like ligand binding oxidase subfamily.</text>
</comment>
<sequence>MNRTRSASMAQGGLNWDSLPLKLFAGGNAKFWNPADIDFSRDRADWERLTDDERSYATRLCAEFIAGEESVTQDIQPFMAAMRAEGRLGDEMYLTQFAFEEAKHVQVFRMWLDAVGVTDDLHHFLDDVPSYRTIFYEELPDCLNALTIDPSPAAQVRASVTYNHMVEGMLALTGYFGWHKICVERGILPGMQELVRRIGDDERRHMAWGTFTCRRHVAADDANWGVFETRMNELMPLGLRLIEEGFALYDPMPFDLSVDEFMAYASDKGMRRFGTIASARGRPLAEIDLDYTPVQLEDTFADEDARALAAV</sequence>
<gene>
    <name type="ordered locus">MAP_3672</name>
</gene>
<name>RIR2H_MYCPA</name>
<reference key="1">
    <citation type="journal article" date="2005" name="Proc. Natl. Acad. Sci. U.S.A.">
        <title>The complete genome sequence of Mycobacterium avium subspecies paratuberculosis.</title>
        <authorList>
            <person name="Li L."/>
            <person name="Bannantine J.P."/>
            <person name="Zhang Q."/>
            <person name="Amonsin A."/>
            <person name="May B.J."/>
            <person name="Alt D."/>
            <person name="Banerji N."/>
            <person name="Kanjilal S."/>
            <person name="Kapur V."/>
        </authorList>
    </citation>
    <scope>NUCLEOTIDE SEQUENCE [LARGE SCALE GENOMIC DNA]</scope>
    <source>
        <strain>ATCC BAA-968 / K-10</strain>
    </source>
</reference>
<accession>Q73TP6</accession>